<keyword id="KW-0521">NADP</keyword>
<keyword id="KW-0560">Oxidoreductase</keyword>
<keyword id="KW-1185">Reference proteome</keyword>
<keyword id="KW-0686">Riboflavin biosynthesis</keyword>
<reference key="1">
    <citation type="journal article" date="2002" name="Nature">
        <title>The genome sequence of Schizosaccharomyces pombe.</title>
        <authorList>
            <person name="Wood V."/>
            <person name="Gwilliam R."/>
            <person name="Rajandream M.A."/>
            <person name="Lyne M.H."/>
            <person name="Lyne R."/>
            <person name="Stewart A."/>
            <person name="Sgouros J.G."/>
            <person name="Peat N."/>
            <person name="Hayles J."/>
            <person name="Baker S.G."/>
            <person name="Basham D."/>
            <person name="Bowman S."/>
            <person name="Brooks K."/>
            <person name="Brown D."/>
            <person name="Brown S."/>
            <person name="Chillingworth T."/>
            <person name="Churcher C.M."/>
            <person name="Collins M."/>
            <person name="Connor R."/>
            <person name="Cronin A."/>
            <person name="Davis P."/>
            <person name="Feltwell T."/>
            <person name="Fraser A."/>
            <person name="Gentles S."/>
            <person name="Goble A."/>
            <person name="Hamlin N."/>
            <person name="Harris D.E."/>
            <person name="Hidalgo J."/>
            <person name="Hodgson G."/>
            <person name="Holroyd S."/>
            <person name="Hornsby T."/>
            <person name="Howarth S."/>
            <person name="Huckle E.J."/>
            <person name="Hunt S."/>
            <person name="Jagels K."/>
            <person name="James K.D."/>
            <person name="Jones L."/>
            <person name="Jones M."/>
            <person name="Leather S."/>
            <person name="McDonald S."/>
            <person name="McLean J."/>
            <person name="Mooney P."/>
            <person name="Moule S."/>
            <person name="Mungall K.L."/>
            <person name="Murphy L.D."/>
            <person name="Niblett D."/>
            <person name="Odell C."/>
            <person name="Oliver K."/>
            <person name="O'Neil S."/>
            <person name="Pearson D."/>
            <person name="Quail M.A."/>
            <person name="Rabbinowitsch E."/>
            <person name="Rutherford K.M."/>
            <person name="Rutter S."/>
            <person name="Saunders D."/>
            <person name="Seeger K."/>
            <person name="Sharp S."/>
            <person name="Skelton J."/>
            <person name="Simmonds M.N."/>
            <person name="Squares R."/>
            <person name="Squares S."/>
            <person name="Stevens K."/>
            <person name="Taylor K."/>
            <person name="Taylor R.G."/>
            <person name="Tivey A."/>
            <person name="Walsh S.V."/>
            <person name="Warren T."/>
            <person name="Whitehead S."/>
            <person name="Woodward J.R."/>
            <person name="Volckaert G."/>
            <person name="Aert R."/>
            <person name="Robben J."/>
            <person name="Grymonprez B."/>
            <person name="Weltjens I."/>
            <person name="Vanstreels E."/>
            <person name="Rieger M."/>
            <person name="Schaefer M."/>
            <person name="Mueller-Auer S."/>
            <person name="Gabel C."/>
            <person name="Fuchs M."/>
            <person name="Duesterhoeft A."/>
            <person name="Fritzc C."/>
            <person name="Holzer E."/>
            <person name="Moestl D."/>
            <person name="Hilbert H."/>
            <person name="Borzym K."/>
            <person name="Langer I."/>
            <person name="Beck A."/>
            <person name="Lehrach H."/>
            <person name="Reinhardt R."/>
            <person name="Pohl T.M."/>
            <person name="Eger P."/>
            <person name="Zimmermann W."/>
            <person name="Wedler H."/>
            <person name="Wambutt R."/>
            <person name="Purnelle B."/>
            <person name="Goffeau A."/>
            <person name="Cadieu E."/>
            <person name="Dreano S."/>
            <person name="Gloux S."/>
            <person name="Lelaure V."/>
            <person name="Mottier S."/>
            <person name="Galibert F."/>
            <person name="Aves S.J."/>
            <person name="Xiang Z."/>
            <person name="Hunt C."/>
            <person name="Moore K."/>
            <person name="Hurst S.M."/>
            <person name="Lucas M."/>
            <person name="Rochet M."/>
            <person name="Gaillardin C."/>
            <person name="Tallada V.A."/>
            <person name="Garzon A."/>
            <person name="Thode G."/>
            <person name="Daga R.R."/>
            <person name="Cruzado L."/>
            <person name="Jimenez J."/>
            <person name="Sanchez M."/>
            <person name="del Rey F."/>
            <person name="Benito J."/>
            <person name="Dominguez A."/>
            <person name="Revuelta J.L."/>
            <person name="Moreno S."/>
            <person name="Armstrong J."/>
            <person name="Forsburg S.L."/>
            <person name="Cerutti L."/>
            <person name="Lowe T."/>
            <person name="McCombie W.R."/>
            <person name="Paulsen I."/>
            <person name="Potashkin J."/>
            <person name="Shpakovski G.V."/>
            <person name="Ussery D."/>
            <person name="Barrell B.G."/>
            <person name="Nurse P."/>
        </authorList>
    </citation>
    <scope>NUCLEOTIDE SEQUENCE [LARGE SCALE GENOMIC DNA]</scope>
    <source>
        <strain>972 / ATCC 24843</strain>
    </source>
</reference>
<comment type="function">
    <text evidence="1">Catalyzes an early step in riboflavin biosynthesis, the NADPH-dependent reduction of the ribose side chain of 2,5-diamino-6-ribosylamino-4(3H)-pyrimidinone 5'-phosphate, yielding 2,5-diamino-6-ribitylamino-4(3H)-pyrimidinone 5'-phosphate.</text>
</comment>
<comment type="catalytic activity">
    <reaction>
        <text>2,5-diamino-6-(1-D-ribitylamino)pyrimidin-4(3H)-one 5'-phosphate + NADP(+) = 2,5-diamino-6-(1-D-ribosylamino)pyrimidin-4(3H)-one 5'-phosphate + NADPH + H(+)</text>
        <dbReference type="Rhea" id="RHEA:27278"/>
        <dbReference type="ChEBI" id="CHEBI:15378"/>
        <dbReference type="ChEBI" id="CHEBI:57783"/>
        <dbReference type="ChEBI" id="CHEBI:58349"/>
        <dbReference type="ChEBI" id="CHEBI:58890"/>
        <dbReference type="ChEBI" id="CHEBI:59545"/>
        <dbReference type="EC" id="1.1.1.302"/>
    </reaction>
</comment>
<comment type="catalytic activity">
    <reaction>
        <text>2,5-diamino-6-(1-D-ribitylamino)pyrimidin-4(3H)-one 5'-phosphate + NAD(+) = 2,5-diamino-6-(1-D-ribosylamino)pyrimidin-4(3H)-one 5'-phosphate + NADH + H(+)</text>
        <dbReference type="Rhea" id="RHEA:27274"/>
        <dbReference type="ChEBI" id="CHEBI:15378"/>
        <dbReference type="ChEBI" id="CHEBI:57540"/>
        <dbReference type="ChEBI" id="CHEBI:57945"/>
        <dbReference type="ChEBI" id="CHEBI:58890"/>
        <dbReference type="ChEBI" id="CHEBI:59545"/>
        <dbReference type="EC" id="1.1.1.302"/>
    </reaction>
</comment>
<comment type="pathway">
    <text>Cofactor biosynthesis; riboflavin biosynthesis.</text>
</comment>
<comment type="subunit">
    <text evidence="1">Homodimer.</text>
</comment>
<comment type="similarity">
    <text evidence="2">Belongs to the HTP reductase family.</text>
</comment>
<name>RIB7_SCHPO</name>
<feature type="chain" id="PRO_0000135941" description="2,5-diamino-6-ribosylamino-4(3H)-pyrimidinone 5'-phosphate reductase">
    <location>
        <begin position="1"/>
        <end position="268"/>
    </location>
</feature>
<feature type="binding site" evidence="1">
    <location>
        <position position="68"/>
    </location>
    <ligand>
        <name>NADP(+)</name>
        <dbReference type="ChEBI" id="CHEBI:58349"/>
    </ligand>
</feature>
<feature type="binding site" evidence="1">
    <location>
        <position position="72"/>
    </location>
    <ligand>
        <name>NADP(+)</name>
        <dbReference type="ChEBI" id="CHEBI:58349"/>
    </ligand>
</feature>
<feature type="binding site" evidence="1">
    <location>
        <begin position="103"/>
        <end position="106"/>
    </location>
    <ligand>
        <name>NADP(+)</name>
        <dbReference type="ChEBI" id="CHEBI:58349"/>
    </ligand>
</feature>
<feature type="binding site" evidence="1">
    <location>
        <begin position="191"/>
        <end position="195"/>
    </location>
    <ligand>
        <name>NADP(+)</name>
        <dbReference type="ChEBI" id="CHEBI:58349"/>
    </ligand>
</feature>
<protein>
    <recommendedName>
        <fullName>2,5-diamino-6-ribosylamino-4(3H)-pyrimidinone 5'-phosphate reductase</fullName>
        <shortName>DAROPP reductase</shortName>
        <shortName>DARP reductase</shortName>
        <ecNumber>1.1.1.302</ecNumber>
    </recommendedName>
    <alternativeName>
        <fullName>2,5-diamino-6-(5-phospho-D-ribosylamino)pyrimidin-4(3H)-one reductase</fullName>
    </alternativeName>
    <alternativeName>
        <fullName>2,5-diamino-6-ribitylamino-4(3H)-pyrimidinone 5'-phosphate synthase</fullName>
        <shortName>DARIPP synthase</shortName>
    </alternativeName>
</protein>
<evidence type="ECO:0000250" key="1"/>
<evidence type="ECO:0000305" key="2"/>
<organism>
    <name type="scientific">Schizosaccharomyces pombe (strain 972 / ATCC 24843)</name>
    <name type="common">Fission yeast</name>
    <dbReference type="NCBI Taxonomy" id="284812"/>
    <lineage>
        <taxon>Eukaryota</taxon>
        <taxon>Fungi</taxon>
        <taxon>Dikarya</taxon>
        <taxon>Ascomycota</taxon>
        <taxon>Taphrinomycotina</taxon>
        <taxon>Schizosaccharomycetes</taxon>
        <taxon>Schizosaccharomycetales</taxon>
        <taxon>Schizosaccharomycetaceae</taxon>
        <taxon>Schizosaccharomyces</taxon>
    </lineage>
</organism>
<dbReference type="EC" id="1.1.1.302"/>
<dbReference type="EMBL" id="CU329671">
    <property type="protein sequence ID" value="CAB76046.1"/>
    <property type="molecule type" value="Genomic_DNA"/>
</dbReference>
<dbReference type="PIR" id="T50354">
    <property type="entry name" value="T50354"/>
</dbReference>
<dbReference type="RefSeq" id="NP_596590.1">
    <property type="nucleotide sequence ID" value="NM_001022510.2"/>
</dbReference>
<dbReference type="SMR" id="Q9P7L3"/>
<dbReference type="BioGRID" id="277151">
    <property type="interactions" value="1"/>
</dbReference>
<dbReference type="FunCoup" id="Q9P7L3">
    <property type="interactions" value="128"/>
</dbReference>
<dbReference type="STRING" id="284812.Q9P7L3"/>
<dbReference type="iPTMnet" id="Q9P7L3"/>
<dbReference type="PaxDb" id="4896-SPBC21C3.10c.1"/>
<dbReference type="EnsemblFungi" id="SPBC21C3.10c.1">
    <property type="protein sequence ID" value="SPBC21C3.10c.1:pep"/>
    <property type="gene ID" value="SPBC21C3.10c"/>
</dbReference>
<dbReference type="PomBase" id="SPBC21C3.10c"/>
<dbReference type="VEuPathDB" id="FungiDB:SPBC21C3.10c"/>
<dbReference type="eggNOG" id="ENOG502RZWZ">
    <property type="taxonomic scope" value="Eukaryota"/>
</dbReference>
<dbReference type="HOGENOM" id="CLU_036590_6_0_1"/>
<dbReference type="InParanoid" id="Q9P7L3"/>
<dbReference type="OMA" id="ERWNCIE"/>
<dbReference type="PhylomeDB" id="Q9P7L3"/>
<dbReference type="UniPathway" id="UPA00275"/>
<dbReference type="PRO" id="PR:Q9P7L3"/>
<dbReference type="Proteomes" id="UP000002485">
    <property type="component" value="Chromosome II"/>
</dbReference>
<dbReference type="GO" id="GO:0005829">
    <property type="term" value="C:cytosol"/>
    <property type="evidence" value="ECO:0007005"/>
    <property type="project" value="PomBase"/>
</dbReference>
<dbReference type="GO" id="GO:0005634">
    <property type="term" value="C:nucleus"/>
    <property type="evidence" value="ECO:0007005"/>
    <property type="project" value="PomBase"/>
</dbReference>
<dbReference type="GO" id="GO:0008703">
    <property type="term" value="F:5-amino-6-(5-phosphoribosylamino)uracil reductase activity"/>
    <property type="evidence" value="ECO:0000250"/>
    <property type="project" value="PomBase"/>
</dbReference>
<dbReference type="GO" id="GO:0009231">
    <property type="term" value="P:riboflavin biosynthetic process"/>
    <property type="evidence" value="ECO:0000266"/>
    <property type="project" value="PomBase"/>
</dbReference>
<dbReference type="FunFam" id="3.40.430.10:FF:000011">
    <property type="entry name" value="Rib7p"/>
    <property type="match status" value="1"/>
</dbReference>
<dbReference type="Gene3D" id="3.40.430.10">
    <property type="entry name" value="Dihydrofolate Reductase, subunit A"/>
    <property type="match status" value="1"/>
</dbReference>
<dbReference type="InterPro" id="IPR024072">
    <property type="entry name" value="DHFR-like_dom_sf"/>
</dbReference>
<dbReference type="InterPro" id="IPR002734">
    <property type="entry name" value="RibDG_C"/>
</dbReference>
<dbReference type="InterPro" id="IPR050765">
    <property type="entry name" value="Riboflavin_Biosynth_HTPR"/>
</dbReference>
<dbReference type="PANTHER" id="PTHR38011:SF7">
    <property type="entry name" value="2,5-DIAMINO-6-RIBOSYLAMINO-4(3H)-PYRIMIDINONE 5'-PHOSPHATE REDUCTASE"/>
    <property type="match status" value="1"/>
</dbReference>
<dbReference type="PANTHER" id="PTHR38011">
    <property type="entry name" value="DIHYDROFOLATE REDUCTASE FAMILY PROTEIN (AFU_ORTHOLOGUE AFUA_8G06820)"/>
    <property type="match status" value="1"/>
</dbReference>
<dbReference type="Pfam" id="PF01872">
    <property type="entry name" value="RibD_C"/>
    <property type="match status" value="1"/>
</dbReference>
<dbReference type="SUPFAM" id="SSF53597">
    <property type="entry name" value="Dihydrofolate reductase-like"/>
    <property type="match status" value="1"/>
</dbReference>
<sequence length="268" mass="29752">MESSQAYFPPSANKKHVLLTWAQSINGRIGYVVESPSLGQLRLSSKESFVMTHLLRTKFDGIMVGSRTAENDNPSLTAKLPDPANPDCLLPLNKQPIPIIVDSNLRLDYASLKVIRLARERLGKPPLIIVAPSIWQQVQHDSKLKEAVKLIQSVGGRCIIRNEDSPDSWSDYVALDKLLQNGVNRIMVEGGAELLAKAFGSTDIDAYVVTIVPKIFSCSNTTEIKNLNNLNLTTNSHWYPCGPDVIFTNYSDEFYESYKSLLTNSDAI</sequence>
<gene>
    <name type="ORF">SPBC21C3.10c</name>
</gene>
<proteinExistence type="inferred from homology"/>
<accession>Q9P7L3</accession>